<protein>
    <recommendedName>
        <fullName>Stonin-1</fullName>
    </recommendedName>
    <alternativeName>
        <fullName>Stoned B-like factor</fullName>
    </alternativeName>
</protein>
<sequence>MCSTNPGKWVTFDDDPAVQSSQKSKNFPLENQGVCRPNGLKLNLPGLREFPSGSSSTSSTPLSSPIVDFYFSPGPPSNSPLSTPTKDFPGFPGIPKAGTHVLYPIPESSSDSPLAISGGESSLLPTRPTCLSHALLPSDHSCTHPTPKVGLPDEVNPQQAESLGFQSDDLPQFQYFREDCAFSSPFWKDEGSDSHFTLDPPGSKKMFSSRNKEMPIDQKSLNKCSLNYICEKLEHLQSAENQDSLRSLSMHCLCAEENASSFVPHTLFRSQPKSGWSFMLRIPEKKNMMSSRQWGPIFLKVLPGGILQMYYEQGLEKPFKEIQLDPYCRLSEPKVENFSVAGKIHTVKIEHVSYTEKRKYHSKTEVVHEPDIEQMLKLGSTSYHDFLDFLTTVEEELMKLPAVSKPKKNYEEQEISLEIVDNFWGKVTKEGKFVESAVITQIYCLCFVNGNLECFLTLNDLELPKRDESYYEKDSEKKGIDILDYHFHKCVNVQEFEQSRIIKFVPLDACRFELMRFKTLYNGDNLPFSLKSVVVVQGAYVELQAFVNMASLAQRSSYAGSLRSCDNIRIHFPVPSQWIKALWTMNLQRQKSLKAKMNRRACLGSLQELESEPVIQVTVGSAKYESAYQAVVWKIDRLPDKNSSLDHPHCLSYKLELGSDQEIPSDWYPFATVQFSVPDTCASRTEVRSLGVESDVQPQKHVQQRACYNIQVEIEKKWIKIDGEDPDKIGDCITQ</sequence>
<reference key="1">
    <citation type="journal article" date="1999" name="J. Biol. Chem.">
        <title>Identification of a general transcription factor TFIIAalpha/beta homolog selectively expressed in testis.</title>
        <authorList>
            <person name="Upadhyaya A.B."/>
            <person name="Lee S.H."/>
            <person name="DeJong J."/>
        </authorList>
    </citation>
    <scope>NUCLEOTIDE SEQUENCE [MRNA] (ISOFORM 1)</scope>
    <source>
        <tissue>Placenta</tissue>
    </source>
</reference>
<reference key="2">
    <citation type="journal article" date="2001" name="Biol. Reprod.">
        <title>TFIIAalpha/beta-like factor is encoded by a germ cell-specific gene whose expression is up-regulated with other general transcription factors during spermatogenesis in the mouse.</title>
        <authorList>
            <person name="Han S."/>
            <person name="Zhou L."/>
            <person name="Upadhyaya A.B."/>
            <person name="Lee S.H."/>
            <person name="Parker K.L."/>
            <person name="DeJong J."/>
        </authorList>
    </citation>
    <scope>NUCLEOTIDE SEQUENCE [MRNA] (ISOFORM 1)</scope>
</reference>
<reference key="3">
    <citation type="journal article" date="2004" name="Nat. Genet.">
        <title>Complete sequencing and characterization of 21,243 full-length human cDNAs.</title>
        <authorList>
            <person name="Ota T."/>
            <person name="Suzuki Y."/>
            <person name="Nishikawa T."/>
            <person name="Otsuki T."/>
            <person name="Sugiyama T."/>
            <person name="Irie R."/>
            <person name="Wakamatsu A."/>
            <person name="Hayashi K."/>
            <person name="Sato H."/>
            <person name="Nagai K."/>
            <person name="Kimura K."/>
            <person name="Makita H."/>
            <person name="Sekine M."/>
            <person name="Obayashi M."/>
            <person name="Nishi T."/>
            <person name="Shibahara T."/>
            <person name="Tanaka T."/>
            <person name="Ishii S."/>
            <person name="Yamamoto J."/>
            <person name="Saito K."/>
            <person name="Kawai Y."/>
            <person name="Isono Y."/>
            <person name="Nakamura Y."/>
            <person name="Nagahari K."/>
            <person name="Murakami K."/>
            <person name="Yasuda T."/>
            <person name="Iwayanagi T."/>
            <person name="Wagatsuma M."/>
            <person name="Shiratori A."/>
            <person name="Sudo H."/>
            <person name="Hosoiri T."/>
            <person name="Kaku Y."/>
            <person name="Kodaira H."/>
            <person name="Kondo H."/>
            <person name="Sugawara M."/>
            <person name="Takahashi M."/>
            <person name="Kanda K."/>
            <person name="Yokoi T."/>
            <person name="Furuya T."/>
            <person name="Kikkawa E."/>
            <person name="Omura Y."/>
            <person name="Abe K."/>
            <person name="Kamihara K."/>
            <person name="Katsuta N."/>
            <person name="Sato K."/>
            <person name="Tanikawa M."/>
            <person name="Yamazaki M."/>
            <person name="Ninomiya K."/>
            <person name="Ishibashi T."/>
            <person name="Yamashita H."/>
            <person name="Murakawa K."/>
            <person name="Fujimori K."/>
            <person name="Tanai H."/>
            <person name="Kimata M."/>
            <person name="Watanabe M."/>
            <person name="Hiraoka S."/>
            <person name="Chiba Y."/>
            <person name="Ishida S."/>
            <person name="Ono Y."/>
            <person name="Takiguchi S."/>
            <person name="Watanabe S."/>
            <person name="Yosida M."/>
            <person name="Hotuta T."/>
            <person name="Kusano J."/>
            <person name="Kanehori K."/>
            <person name="Takahashi-Fujii A."/>
            <person name="Hara H."/>
            <person name="Tanase T.-O."/>
            <person name="Nomura Y."/>
            <person name="Togiya S."/>
            <person name="Komai F."/>
            <person name="Hara R."/>
            <person name="Takeuchi K."/>
            <person name="Arita M."/>
            <person name="Imose N."/>
            <person name="Musashino K."/>
            <person name="Yuuki H."/>
            <person name="Oshima A."/>
            <person name="Sasaki N."/>
            <person name="Aotsuka S."/>
            <person name="Yoshikawa Y."/>
            <person name="Matsunawa H."/>
            <person name="Ichihara T."/>
            <person name="Shiohata N."/>
            <person name="Sano S."/>
            <person name="Moriya S."/>
            <person name="Momiyama H."/>
            <person name="Satoh N."/>
            <person name="Takami S."/>
            <person name="Terashima Y."/>
            <person name="Suzuki O."/>
            <person name="Nakagawa S."/>
            <person name="Senoh A."/>
            <person name="Mizoguchi H."/>
            <person name="Goto Y."/>
            <person name="Shimizu F."/>
            <person name="Wakebe H."/>
            <person name="Hishigaki H."/>
            <person name="Watanabe T."/>
            <person name="Sugiyama A."/>
            <person name="Takemoto M."/>
            <person name="Kawakami B."/>
            <person name="Yamazaki M."/>
            <person name="Watanabe K."/>
            <person name="Kumagai A."/>
            <person name="Itakura S."/>
            <person name="Fukuzumi Y."/>
            <person name="Fujimori Y."/>
            <person name="Komiyama M."/>
            <person name="Tashiro H."/>
            <person name="Tanigami A."/>
            <person name="Fujiwara T."/>
            <person name="Ono T."/>
            <person name="Yamada K."/>
            <person name="Fujii Y."/>
            <person name="Ozaki K."/>
            <person name="Hirao M."/>
            <person name="Ohmori Y."/>
            <person name="Kawabata A."/>
            <person name="Hikiji T."/>
            <person name="Kobatake N."/>
            <person name="Inagaki H."/>
            <person name="Ikema Y."/>
            <person name="Okamoto S."/>
            <person name="Okitani R."/>
            <person name="Kawakami T."/>
            <person name="Noguchi S."/>
            <person name="Itoh T."/>
            <person name="Shigeta K."/>
            <person name="Senba T."/>
            <person name="Matsumura K."/>
            <person name="Nakajima Y."/>
            <person name="Mizuno T."/>
            <person name="Morinaga M."/>
            <person name="Sasaki M."/>
            <person name="Togashi T."/>
            <person name="Oyama M."/>
            <person name="Hata H."/>
            <person name="Watanabe M."/>
            <person name="Komatsu T."/>
            <person name="Mizushima-Sugano J."/>
            <person name="Satoh T."/>
            <person name="Shirai Y."/>
            <person name="Takahashi Y."/>
            <person name="Nakagawa K."/>
            <person name="Okumura K."/>
            <person name="Nagase T."/>
            <person name="Nomura N."/>
            <person name="Kikuchi H."/>
            <person name="Masuho Y."/>
            <person name="Yamashita R."/>
            <person name="Nakai K."/>
            <person name="Yada T."/>
            <person name="Nakamura Y."/>
            <person name="Ohara O."/>
            <person name="Isogai T."/>
            <person name="Sugano S."/>
        </authorList>
    </citation>
    <scope>NUCLEOTIDE SEQUENCE [LARGE SCALE MRNA] (ISOFORM 2)</scope>
    <source>
        <tissue>Teratocarcinoma</tissue>
    </source>
</reference>
<reference key="4">
    <citation type="journal article" date="2005" name="Nature">
        <title>Generation and annotation of the DNA sequences of human chromosomes 2 and 4.</title>
        <authorList>
            <person name="Hillier L.W."/>
            <person name="Graves T.A."/>
            <person name="Fulton R.S."/>
            <person name="Fulton L.A."/>
            <person name="Pepin K.H."/>
            <person name="Minx P."/>
            <person name="Wagner-McPherson C."/>
            <person name="Layman D."/>
            <person name="Wylie K."/>
            <person name="Sekhon M."/>
            <person name="Becker M.C."/>
            <person name="Fewell G.A."/>
            <person name="Delehaunty K.D."/>
            <person name="Miner T.L."/>
            <person name="Nash W.E."/>
            <person name="Kremitzki C."/>
            <person name="Oddy L."/>
            <person name="Du H."/>
            <person name="Sun H."/>
            <person name="Bradshaw-Cordum H."/>
            <person name="Ali J."/>
            <person name="Carter J."/>
            <person name="Cordes M."/>
            <person name="Harris A."/>
            <person name="Isak A."/>
            <person name="van Brunt A."/>
            <person name="Nguyen C."/>
            <person name="Du F."/>
            <person name="Courtney L."/>
            <person name="Kalicki J."/>
            <person name="Ozersky P."/>
            <person name="Abbott S."/>
            <person name="Armstrong J."/>
            <person name="Belter E.A."/>
            <person name="Caruso L."/>
            <person name="Cedroni M."/>
            <person name="Cotton M."/>
            <person name="Davidson T."/>
            <person name="Desai A."/>
            <person name="Elliott G."/>
            <person name="Erb T."/>
            <person name="Fronick C."/>
            <person name="Gaige T."/>
            <person name="Haakenson W."/>
            <person name="Haglund K."/>
            <person name="Holmes A."/>
            <person name="Harkins R."/>
            <person name="Kim K."/>
            <person name="Kruchowski S.S."/>
            <person name="Strong C.M."/>
            <person name="Grewal N."/>
            <person name="Goyea E."/>
            <person name="Hou S."/>
            <person name="Levy A."/>
            <person name="Martinka S."/>
            <person name="Mead K."/>
            <person name="McLellan M.D."/>
            <person name="Meyer R."/>
            <person name="Randall-Maher J."/>
            <person name="Tomlinson C."/>
            <person name="Dauphin-Kohlberg S."/>
            <person name="Kozlowicz-Reilly A."/>
            <person name="Shah N."/>
            <person name="Swearengen-Shahid S."/>
            <person name="Snider J."/>
            <person name="Strong J.T."/>
            <person name="Thompson J."/>
            <person name="Yoakum M."/>
            <person name="Leonard S."/>
            <person name="Pearman C."/>
            <person name="Trani L."/>
            <person name="Radionenko M."/>
            <person name="Waligorski J.E."/>
            <person name="Wang C."/>
            <person name="Rock S.M."/>
            <person name="Tin-Wollam A.-M."/>
            <person name="Maupin R."/>
            <person name="Latreille P."/>
            <person name="Wendl M.C."/>
            <person name="Yang S.-P."/>
            <person name="Pohl C."/>
            <person name="Wallis J.W."/>
            <person name="Spieth J."/>
            <person name="Bieri T.A."/>
            <person name="Berkowicz N."/>
            <person name="Nelson J.O."/>
            <person name="Osborne J."/>
            <person name="Ding L."/>
            <person name="Meyer R."/>
            <person name="Sabo A."/>
            <person name="Shotland Y."/>
            <person name="Sinha P."/>
            <person name="Wohldmann P.E."/>
            <person name="Cook L.L."/>
            <person name="Hickenbotham M.T."/>
            <person name="Eldred J."/>
            <person name="Williams D."/>
            <person name="Jones T.A."/>
            <person name="She X."/>
            <person name="Ciccarelli F.D."/>
            <person name="Izaurralde E."/>
            <person name="Taylor J."/>
            <person name="Schmutz J."/>
            <person name="Myers R.M."/>
            <person name="Cox D.R."/>
            <person name="Huang X."/>
            <person name="McPherson J.D."/>
            <person name="Mardis E.R."/>
            <person name="Clifton S.W."/>
            <person name="Warren W.C."/>
            <person name="Chinwalla A.T."/>
            <person name="Eddy S.R."/>
            <person name="Marra M.A."/>
            <person name="Ovcharenko I."/>
            <person name="Furey T.S."/>
            <person name="Miller W."/>
            <person name="Eichler E.E."/>
            <person name="Bork P."/>
            <person name="Suyama M."/>
            <person name="Torrents D."/>
            <person name="Waterston R.H."/>
            <person name="Wilson R.K."/>
        </authorList>
    </citation>
    <scope>NUCLEOTIDE SEQUENCE [LARGE SCALE GENOMIC DNA]</scope>
</reference>
<reference key="5">
    <citation type="journal article" date="2004" name="Genome Res.">
        <title>The status, quality, and expansion of the NIH full-length cDNA project: the Mammalian Gene Collection (MGC).</title>
        <authorList>
            <consortium name="The MGC Project Team"/>
        </authorList>
    </citation>
    <scope>NUCLEOTIDE SEQUENCE [LARGE SCALE MRNA] (ISOFORM 3)</scope>
    <scope>VARIANT HIS-607</scope>
    <source>
        <tissue>Brain</tissue>
    </source>
</reference>
<reference key="6">
    <citation type="journal article" date="2001" name="J. Cell Biol.">
        <title>Stonin 2: an adaptor-like protein that interacts with components of the endocytic machinery.</title>
        <authorList>
            <person name="Martina J.A."/>
            <person name="Bonangelino C.J."/>
            <person name="Aguilar R.C."/>
            <person name="Bonifacino J.S."/>
        </authorList>
    </citation>
    <scope>NUCLEOTIDE SEQUENCE [MRNA] (ISOFORM 1)</scope>
    <scope>SUBCELLULAR LOCATION</scope>
    <scope>TISSUE SPECIFICITY</scope>
    <scope>LACK OF INTERACTION WITH EPS15; EPS15R AND ITSN1</scope>
    <source>
        <tissue>Heart</tissue>
    </source>
</reference>
<accession>Q9Y6Q2</accession>
<accession>A0A0A6YYH4</accession>
<accession>A8MXJ1</accession>
<accession>B5MCF5</accession>
<accession>B7ZL16</accession>
<accession>Q96JE3</accession>
<accession>Q9BYX3</accession>
<proteinExistence type="evidence at protein level"/>
<organism>
    <name type="scientific">Homo sapiens</name>
    <name type="common">Human</name>
    <dbReference type="NCBI Taxonomy" id="9606"/>
    <lineage>
        <taxon>Eukaryota</taxon>
        <taxon>Metazoa</taxon>
        <taxon>Chordata</taxon>
        <taxon>Craniata</taxon>
        <taxon>Vertebrata</taxon>
        <taxon>Euteleostomi</taxon>
        <taxon>Mammalia</taxon>
        <taxon>Eutheria</taxon>
        <taxon>Euarchontoglires</taxon>
        <taxon>Primates</taxon>
        <taxon>Haplorrhini</taxon>
        <taxon>Catarrhini</taxon>
        <taxon>Hominidae</taxon>
        <taxon>Homo</taxon>
    </lineage>
</organism>
<gene>
    <name type="primary">STON1</name>
    <name type="synonym">SALF</name>
    <name type="synonym">SBLF</name>
    <name type="synonym">STN1</name>
</gene>
<name>STON1_HUMAN</name>
<comment type="function">
    <text evidence="1">May be involved in the endocytic machinery.</text>
</comment>
<comment type="subcellular location">
    <subcellularLocation>
        <location evidence="5">Cytoplasm</location>
    </subcellularLocation>
    <subcellularLocation>
        <location evidence="5">Membrane</location>
    </subcellularLocation>
    <text>Some fraction is membrane-associated.</text>
</comment>
<comment type="alternative products">
    <event type="alternative splicing"/>
    <isoform>
        <id>Q9Y6Q2-1</id>
        <name>1</name>
        <sequence type="displayed"/>
    </isoform>
    <isoform>
        <id>Q9Y6Q2-2</id>
        <name>2</name>
        <sequence type="described" ref="VSP_045845"/>
    </isoform>
    <isoform>
        <id>Q9Y6Q2-3</id>
        <name>3</name>
        <sequence type="described" ref="VSP_045846"/>
    </isoform>
</comment>
<comment type="tissue specificity">
    <text evidence="5">Ubiquitous.</text>
</comment>
<comment type="miscellaneous">
    <text>In contrast to other members of the family, it does not contain NPF (Asn-Pro-Phe) sites and thereby does not interact with EPS15, EPS15R and ITSN1.</text>
</comment>
<comment type="similarity">
    <text evidence="9">Belongs to the Stoned B family.</text>
</comment>
<comment type="sequence caution" evidence="9">
    <conflict type="miscellaneous discrepancy">
        <sequence resource="EMBL-CDS" id="AAD39617"/>
    </conflict>
    <text>Chimeric cDNA. The in vivo relevance of this transcript of the STON1 and GTF2A1L (AC Q9UNN4) genes creating a chimeric protein of 1182 residues is uncertain.</text>
</comment>
<evidence type="ECO:0000250" key="1"/>
<evidence type="ECO:0000255" key="2">
    <source>
        <dbReference type="PROSITE-ProRule" id="PRU00403"/>
    </source>
</evidence>
<evidence type="ECO:0000255" key="3">
    <source>
        <dbReference type="PROSITE-ProRule" id="PRU00404"/>
    </source>
</evidence>
<evidence type="ECO:0000256" key="4">
    <source>
        <dbReference type="SAM" id="MobiDB-lite"/>
    </source>
</evidence>
<evidence type="ECO:0000269" key="5">
    <source>
    </source>
</evidence>
<evidence type="ECO:0000269" key="6">
    <source>
    </source>
</evidence>
<evidence type="ECO:0000303" key="7">
    <source>
    </source>
</evidence>
<evidence type="ECO:0000303" key="8">
    <source>
    </source>
</evidence>
<evidence type="ECO:0000305" key="9"/>
<feature type="chain" id="PRO_0000185736" description="Stonin-1">
    <location>
        <begin position="1"/>
        <end position="735"/>
    </location>
</feature>
<feature type="domain" description="SHD" evidence="2">
    <location>
        <begin position="275"/>
        <end position="408"/>
    </location>
</feature>
<feature type="domain" description="MHD" evidence="3">
    <location>
        <begin position="412"/>
        <end position="715"/>
    </location>
</feature>
<feature type="region of interest" description="Disordered" evidence="4">
    <location>
        <begin position="1"/>
        <end position="35"/>
    </location>
</feature>
<feature type="splice variant" id="VSP_045845" description="In isoform 2." evidence="7">
    <original>VEIEKKWIKIDGEDPDKIGDCITQ</original>
    <variation>PKLYRSVIEDVIEGVRNLFAEEGIEEQVLKDLKQLWETKVLQSKATEDFFRNSIQSPLFTLQLPHSLHQTLQSSTASLVIPAGRTLPSFTTAELGTSNSSANFTFPGYPIHVPAGVTLQTVSGHLYKVNVPIMVTETSGRAGILQHPIQQVFQQLGQPSVIQTSVPQLNPWSLQATTEKSQRIETVLQQPAILPSGPVDRKHLENATSDILVSPGNEHKIVPEALLCHQESSHYISLPGVVFSPQVSQTNSNVESVLSGSASMAQNLHDESLSTSPHGALHQHVTDIQLHILKNRMYGCDSVKQPRNIEEPSNIPVSEKDSNSQVDLSIRVTDDDIGEIIQVDGSGDTSSNEEIGSTRDADENEFLGNIDGGDLKVPEEEADSISNEDSATNSSDNEDPQVNIVEEDPLNSGDDVSEQDVPDLFDTDNVIVCQYDKQGDTRVRHGQQ</variation>
    <location>
        <begin position="712"/>
        <end position="735"/>
    </location>
</feature>
<feature type="splice variant" id="VSP_045846" description="In isoform 3." evidence="8">
    <original>VEIEKKWIKIDGEDPDKIGDCITQ</original>
    <variation>PKLYRSVIEDVIEGVRNLFAEEGIEEQVLKDLKQLWETKVLQSKATEDFFRNSIQSPLFTLQLPHSLHQTLQSSTGHLYKVNVPIMVTETSGRAGILQHPIQQVFQQLGQPSVIQTSVPQLNPWSLQATTEKSQRIETVLQQPAILPSGPVDRKHLENATSDILVSPGNEHKIVPEALLCHQESSHYISLPGVVFSPQVSQTNSNVESVLSGSASMAQNLHDESLSTSPHGALHQHVTDIQLHILKNRMYGCDSVKQPRNIEEPSNIPVSEKDSNSQVDLSIRVTDDDIGEIIQVDGSGDTSSNEEIGSTRDADENEFLGNIDGGDLKVPEEEADSISNEDSATNSSDNEDPQVNIVEEDPLNSGDDVSEQDVPDLFDTDNVIVCQYDKIHRSKNKWKFYLKDGVMCFGGRDYVFAKAIGDAEW</variation>
    <location>
        <begin position="712"/>
        <end position="735"/>
    </location>
</feature>
<feature type="sequence variant" id="VAR_052156" description="In dbSNP:rs17039250.">
    <original>K</original>
    <variation>N</variation>
    <location>
        <position position="8"/>
    </location>
</feature>
<feature type="sequence variant" id="VAR_020183" description="In dbSNP:rs940389.">
    <original>R</original>
    <variation>T</variation>
    <location>
        <position position="127"/>
    </location>
</feature>
<feature type="sequence variant" id="VAR_020184" description="In dbSNP:rs3828341.">
    <original>Q</original>
    <variation>H</variation>
    <location>
        <position position="544"/>
    </location>
</feature>
<feature type="sequence variant" id="VAR_020185" description="In dbSNP:rs3792234." evidence="6">
    <original>Q</original>
    <variation>H</variation>
    <location>
        <position position="607"/>
    </location>
</feature>
<feature type="sequence conflict" description="In Ref. 2; AAD39617/AAK11719." evidence="9" ref="2">
    <original>L</original>
    <variation>P</variation>
    <location>
        <position position="44"/>
    </location>
</feature>
<feature type="sequence conflict" description="In Ref. 5; AAI43521." evidence="9" ref="5">
    <original>S</original>
    <variation>I</variation>
    <location>
        <position position="167"/>
    </location>
</feature>
<feature type="sequence conflict" description="In Ref. 2; AAD39617/AAK11719." evidence="9" ref="2">
    <original>W</original>
    <variation>R</variation>
    <location>
        <position position="187"/>
    </location>
</feature>
<feature type="sequence conflict" description="In Ref. 3; AK309740." evidence="9" ref="3">
    <original>N</original>
    <variation>D</variation>
    <location sequence="Q9Y6Q2-2">
        <position position="963"/>
    </location>
</feature>
<dbReference type="EMBL" id="AF026169">
    <property type="protein sequence ID" value="AAD39617.1"/>
    <property type="status" value="ALT_SEQ"/>
    <property type="molecule type" value="mRNA"/>
</dbReference>
<dbReference type="EMBL" id="AY026319">
    <property type="protein sequence ID" value="AAK11719.1"/>
    <property type="molecule type" value="mRNA"/>
</dbReference>
<dbReference type="EMBL" id="AF255310">
    <property type="protein sequence ID" value="AAK57559.1"/>
    <property type="molecule type" value="mRNA"/>
</dbReference>
<dbReference type="EMBL" id="AK309740">
    <property type="status" value="NOT_ANNOTATED_CDS"/>
    <property type="molecule type" value="mRNA"/>
</dbReference>
<dbReference type="EMBL" id="AC073082">
    <property type="status" value="NOT_ANNOTATED_CDS"/>
    <property type="molecule type" value="Genomic_DNA"/>
</dbReference>
<dbReference type="EMBL" id="AC087816">
    <property type="status" value="NOT_ANNOTATED_CDS"/>
    <property type="molecule type" value="Genomic_DNA"/>
</dbReference>
<dbReference type="EMBL" id="AC091788">
    <property type="status" value="NOT_ANNOTATED_CDS"/>
    <property type="molecule type" value="Genomic_DNA"/>
</dbReference>
<dbReference type="EMBL" id="KF456667">
    <property type="status" value="NOT_ANNOTATED_CDS"/>
    <property type="molecule type" value="Genomic_DNA"/>
</dbReference>
<dbReference type="EMBL" id="BC143520">
    <property type="protein sequence ID" value="AAI43521.1"/>
    <property type="molecule type" value="mRNA"/>
</dbReference>
<dbReference type="CCDS" id="CCDS1841.1">
    <molecule id="Q9Y6Q2-1"/>
</dbReference>
<dbReference type="RefSeq" id="NP_001185522.1">
    <molecule id="Q9Y6Q2-2"/>
    <property type="nucleotide sequence ID" value="NM_001198593.1"/>
</dbReference>
<dbReference type="RefSeq" id="NP_001185523.1">
    <molecule id="Q9Y6Q2-3"/>
    <property type="nucleotide sequence ID" value="NM_001198594.1"/>
</dbReference>
<dbReference type="RefSeq" id="NP_001185524.1">
    <molecule id="Q9Y6Q2-1"/>
    <property type="nucleotide sequence ID" value="NM_001198595.2"/>
</dbReference>
<dbReference type="RefSeq" id="NP_006864.2">
    <molecule id="Q9Y6Q2-1"/>
    <property type="nucleotide sequence ID" value="NM_006873.3"/>
</dbReference>
<dbReference type="SMR" id="Q9Y6Q2"/>
<dbReference type="BioGRID" id="116226">
    <property type="interactions" value="18"/>
</dbReference>
<dbReference type="BioGRID" id="130414">
    <property type="interactions" value="3"/>
</dbReference>
<dbReference type="FunCoup" id="Q9Y6Q2">
    <property type="interactions" value="115"/>
</dbReference>
<dbReference type="IntAct" id="Q9Y6Q2">
    <property type="interactions" value="5"/>
</dbReference>
<dbReference type="MINT" id="Q9Y6Q2"/>
<dbReference type="STRING" id="9606.ENSP00000384615"/>
<dbReference type="GlyGen" id="Q9Y6Q2">
    <property type="glycosylation" value="2 sites, 1 O-linked glycan (2 sites)"/>
</dbReference>
<dbReference type="iPTMnet" id="Q9Y6Q2"/>
<dbReference type="PhosphoSitePlus" id="Q9Y6Q2"/>
<dbReference type="BioMuta" id="STON1"/>
<dbReference type="DMDM" id="33860221"/>
<dbReference type="jPOST" id="Q9Y6Q2"/>
<dbReference type="MassIVE" id="Q9Y6Q2"/>
<dbReference type="PaxDb" id="9606-ENSP00000384615"/>
<dbReference type="PeptideAtlas" id="Q9Y6Q2"/>
<dbReference type="ProteomicsDB" id="86760">
    <molecule id="Q9Y6Q2-1"/>
</dbReference>
<dbReference type="Pumba" id="Q9Y6Q2"/>
<dbReference type="Antibodypedia" id="35033">
    <property type="antibodies" value="94 antibodies from 23 providers"/>
</dbReference>
<dbReference type="DNASU" id="11037"/>
<dbReference type="Ensembl" id="ENST00000404752.6">
    <molecule id="Q9Y6Q2-1"/>
    <property type="protein sequence ID" value="ENSP00000385273.1"/>
    <property type="gene ID" value="ENSG00000243244.7"/>
</dbReference>
<dbReference type="Ensembl" id="ENST00000406226.1">
    <molecule id="Q9Y6Q2-1"/>
    <property type="protein sequence ID" value="ENSP00000384615.1"/>
    <property type="gene ID" value="ENSG00000243244.7"/>
</dbReference>
<dbReference type="Ensembl" id="ENST00000649748.1">
    <molecule id="Q9Y6Q2-1"/>
    <property type="protein sequence ID" value="ENSP00000497745.1"/>
    <property type="gene ID" value="ENSG00000243244.7"/>
</dbReference>
<dbReference type="GeneID" id="11037"/>
<dbReference type="GeneID" id="286749"/>
<dbReference type="KEGG" id="hsa:11037"/>
<dbReference type="KEGG" id="hsa:286749"/>
<dbReference type="MANE-Select" id="ENST00000404752.6">
    <property type="protein sequence ID" value="ENSP00000385273.1"/>
    <property type="RefSeq nucleotide sequence ID" value="NM_006873.4"/>
    <property type="RefSeq protein sequence ID" value="NP_006864.2"/>
</dbReference>
<dbReference type="UCSC" id="uc002rwo.5">
    <molecule id="Q9Y6Q2-1"/>
    <property type="organism name" value="human"/>
</dbReference>
<dbReference type="AGR" id="HGNC:17003"/>
<dbReference type="AGR" id="HGNC:30651"/>
<dbReference type="CTD" id="11037"/>
<dbReference type="CTD" id="286749"/>
<dbReference type="DisGeNET" id="11037"/>
<dbReference type="DisGeNET" id="286749"/>
<dbReference type="GeneCards" id="STON1"/>
<dbReference type="HGNC" id="HGNC:17003">
    <property type="gene designation" value="STON1"/>
</dbReference>
<dbReference type="HPA" id="ENSG00000243244">
    <property type="expression patterns" value="Low tissue specificity"/>
</dbReference>
<dbReference type="MIM" id="605357">
    <property type="type" value="gene"/>
</dbReference>
<dbReference type="neXtProt" id="NX_Q9Y6Q2"/>
<dbReference type="OpenTargets" id="ENSG00000068781"/>
<dbReference type="OpenTargets" id="ENSG00000243244"/>
<dbReference type="PharmGKB" id="PA143485623"/>
<dbReference type="PharmGKB" id="PA162390383"/>
<dbReference type="VEuPathDB" id="HostDB:ENSG00000243244"/>
<dbReference type="eggNOG" id="KOG2677">
    <property type="taxonomic scope" value="Eukaryota"/>
</dbReference>
<dbReference type="GeneTree" id="ENSGT00940000158817"/>
<dbReference type="HOGENOM" id="CLU_016541_0_0_1"/>
<dbReference type="InParanoid" id="Q9Y6Q2"/>
<dbReference type="OMA" id="NIMVHFP"/>
<dbReference type="OrthoDB" id="10063141at2759"/>
<dbReference type="PAN-GO" id="Q9Y6Q2">
    <property type="GO annotations" value="5 GO annotations based on evolutionary models"/>
</dbReference>
<dbReference type="PhylomeDB" id="Q9Y6Q2"/>
<dbReference type="TreeFam" id="TF318623"/>
<dbReference type="PathwayCommons" id="Q9Y6Q2"/>
<dbReference type="Reactome" id="R-HSA-8856825">
    <property type="pathway name" value="Cargo recognition for clathrin-mediated endocytosis"/>
</dbReference>
<dbReference type="Reactome" id="R-HSA-8856828">
    <property type="pathway name" value="Clathrin-mediated endocytosis"/>
</dbReference>
<dbReference type="SignaLink" id="Q9Y6Q2"/>
<dbReference type="BioGRID-ORCS" id="11037">
    <property type="hits" value="11 hits in 1103 CRISPR screens"/>
</dbReference>
<dbReference type="BioGRID-ORCS" id="286749">
    <property type="hits" value="242 hits in 1031 CRISPR screens"/>
</dbReference>
<dbReference type="Pharos" id="Q9Y6Q2">
    <property type="development level" value="Tbio"/>
</dbReference>
<dbReference type="PRO" id="PR:Q9Y6Q2"/>
<dbReference type="Proteomes" id="UP000005640">
    <property type="component" value="Chromosome 2"/>
</dbReference>
<dbReference type="RNAct" id="Q9Y6Q2">
    <property type="molecule type" value="protein"/>
</dbReference>
<dbReference type="Bgee" id="ENSG00000243244">
    <property type="expression patterns" value="Expressed in decidua and 171 other cell types or tissues"/>
</dbReference>
<dbReference type="ExpressionAtlas" id="Q9Y6Q2">
    <property type="expression patterns" value="baseline and differential"/>
</dbReference>
<dbReference type="GO" id="GO:0030122">
    <property type="term" value="C:AP-2 adaptor complex"/>
    <property type="evidence" value="ECO:0000318"/>
    <property type="project" value="GO_Central"/>
</dbReference>
<dbReference type="GO" id="GO:0031252">
    <property type="term" value="C:cell leading edge"/>
    <property type="evidence" value="ECO:0007669"/>
    <property type="project" value="Ensembl"/>
</dbReference>
<dbReference type="GO" id="GO:0042995">
    <property type="term" value="C:cell projection"/>
    <property type="evidence" value="ECO:0007669"/>
    <property type="project" value="Ensembl"/>
</dbReference>
<dbReference type="GO" id="GO:0008021">
    <property type="term" value="C:synaptic vesicle"/>
    <property type="evidence" value="ECO:0000318"/>
    <property type="project" value="GO_Central"/>
</dbReference>
<dbReference type="GO" id="GO:0035615">
    <property type="term" value="F:clathrin adaptor activity"/>
    <property type="evidence" value="ECO:0000318"/>
    <property type="project" value="GO_Central"/>
</dbReference>
<dbReference type="GO" id="GO:0072583">
    <property type="term" value="P:clathrin-dependent endocytosis"/>
    <property type="evidence" value="ECO:0000318"/>
    <property type="project" value="GO_Central"/>
</dbReference>
<dbReference type="GO" id="GO:0048041">
    <property type="term" value="P:focal adhesion assembly"/>
    <property type="evidence" value="ECO:0007669"/>
    <property type="project" value="Ensembl"/>
</dbReference>
<dbReference type="GO" id="GO:0120181">
    <property type="term" value="P:focal adhesion disassembly"/>
    <property type="evidence" value="ECO:0007669"/>
    <property type="project" value="Ensembl"/>
</dbReference>
<dbReference type="GO" id="GO:0048008">
    <property type="term" value="P:platelet-derived growth factor receptor signaling pathway"/>
    <property type="evidence" value="ECO:0007669"/>
    <property type="project" value="Ensembl"/>
</dbReference>
<dbReference type="GO" id="GO:0030100">
    <property type="term" value="P:regulation of endocytosis"/>
    <property type="evidence" value="ECO:0000314"/>
    <property type="project" value="UniProtKB"/>
</dbReference>
<dbReference type="GO" id="GO:0097178">
    <property type="term" value="P:ruffle assembly"/>
    <property type="evidence" value="ECO:0007669"/>
    <property type="project" value="Ensembl"/>
</dbReference>
<dbReference type="GO" id="GO:0006929">
    <property type="term" value="P:substrate-dependent cell migration"/>
    <property type="evidence" value="ECO:0007669"/>
    <property type="project" value="Ensembl"/>
</dbReference>
<dbReference type="GO" id="GO:0048488">
    <property type="term" value="P:synaptic vesicle endocytosis"/>
    <property type="evidence" value="ECO:0000318"/>
    <property type="project" value="GO_Central"/>
</dbReference>
<dbReference type="CDD" id="cd09262">
    <property type="entry name" value="AP_stonin-1_MHD"/>
    <property type="match status" value="1"/>
</dbReference>
<dbReference type="FunFam" id="2.60.40.1170:FF:000017">
    <property type="entry name" value="stonin-1 isoform X2"/>
    <property type="match status" value="1"/>
</dbReference>
<dbReference type="Gene3D" id="2.60.40.1170">
    <property type="entry name" value="Mu homology domain, subdomain B"/>
    <property type="match status" value="2"/>
</dbReference>
<dbReference type="InterPro" id="IPR050431">
    <property type="entry name" value="Adaptor_comp_med_subunit"/>
</dbReference>
<dbReference type="InterPro" id="IPR036168">
    <property type="entry name" value="AP2_Mu_C_sf"/>
</dbReference>
<dbReference type="InterPro" id="IPR028565">
    <property type="entry name" value="MHD"/>
</dbReference>
<dbReference type="InterPro" id="IPR012320">
    <property type="entry name" value="SHD_dom"/>
</dbReference>
<dbReference type="InterPro" id="IPR017110">
    <property type="entry name" value="Stonin"/>
</dbReference>
<dbReference type="PANTHER" id="PTHR10529">
    <property type="entry name" value="AP COMPLEX SUBUNIT MU"/>
    <property type="match status" value="1"/>
</dbReference>
<dbReference type="Pfam" id="PF00928">
    <property type="entry name" value="Adap_comp_sub"/>
    <property type="match status" value="1"/>
</dbReference>
<dbReference type="PIRSF" id="PIRSF037099">
    <property type="entry name" value="Stonin"/>
    <property type="match status" value="1"/>
</dbReference>
<dbReference type="SUPFAM" id="SSF49447">
    <property type="entry name" value="Second domain of Mu2 adaptin subunit (ap50) of ap2 adaptor"/>
    <property type="match status" value="1"/>
</dbReference>
<dbReference type="PROSITE" id="PS51072">
    <property type="entry name" value="MHD"/>
    <property type="match status" value="1"/>
</dbReference>
<dbReference type="PROSITE" id="PS51070">
    <property type="entry name" value="SHD"/>
    <property type="match status" value="1"/>
</dbReference>
<keyword id="KW-0025">Alternative splicing</keyword>
<keyword id="KW-0963">Cytoplasm</keyword>
<keyword id="KW-0254">Endocytosis</keyword>
<keyword id="KW-0472">Membrane</keyword>
<keyword id="KW-1267">Proteomics identification</keyword>
<keyword id="KW-1185">Reference proteome</keyword>